<proteinExistence type="inferred from homology"/>
<feature type="chain" id="PRO_0000101950" description="UDP-N-acetylmuramoyl-L-alanyl-D-glutamate--2,6-diaminopimelate ligase">
    <location>
        <begin position="1"/>
        <end position="506"/>
    </location>
</feature>
<feature type="short sequence motif" description="Meso-diaminopimelate recognition motif">
    <location>
        <begin position="419"/>
        <end position="422"/>
    </location>
</feature>
<feature type="binding site" evidence="1">
    <location>
        <position position="42"/>
    </location>
    <ligand>
        <name>UDP-N-acetyl-alpha-D-muramoyl-L-alanyl-D-glutamate</name>
        <dbReference type="ChEBI" id="CHEBI:83900"/>
    </ligand>
</feature>
<feature type="binding site" evidence="1">
    <location>
        <begin position="125"/>
        <end position="131"/>
    </location>
    <ligand>
        <name>ATP</name>
        <dbReference type="ChEBI" id="CHEBI:30616"/>
    </ligand>
</feature>
<feature type="binding site" evidence="1">
    <location>
        <begin position="166"/>
        <end position="167"/>
    </location>
    <ligand>
        <name>UDP-N-acetyl-alpha-D-muramoyl-L-alanyl-D-glutamate</name>
        <dbReference type="ChEBI" id="CHEBI:83900"/>
    </ligand>
</feature>
<feature type="binding site" evidence="1">
    <location>
        <position position="193"/>
    </location>
    <ligand>
        <name>UDP-N-acetyl-alpha-D-muramoyl-L-alanyl-D-glutamate</name>
        <dbReference type="ChEBI" id="CHEBI:83900"/>
    </ligand>
</feature>
<feature type="binding site" evidence="1">
    <location>
        <position position="201"/>
    </location>
    <ligand>
        <name>UDP-N-acetyl-alpha-D-muramoyl-L-alanyl-D-glutamate</name>
        <dbReference type="ChEBI" id="CHEBI:83900"/>
    </ligand>
</feature>
<feature type="binding site" evidence="1">
    <location>
        <position position="395"/>
    </location>
    <ligand>
        <name>meso-2,6-diaminopimelate</name>
        <dbReference type="ChEBI" id="CHEBI:57791"/>
    </ligand>
</feature>
<feature type="binding site" evidence="1">
    <location>
        <begin position="419"/>
        <end position="422"/>
    </location>
    <ligand>
        <name>meso-2,6-diaminopimelate</name>
        <dbReference type="ChEBI" id="CHEBI:57791"/>
    </ligand>
</feature>
<feature type="binding site" evidence="1">
    <location>
        <position position="475"/>
    </location>
    <ligand>
        <name>meso-2,6-diaminopimelate</name>
        <dbReference type="ChEBI" id="CHEBI:57791"/>
    </ligand>
</feature>
<feature type="binding site" evidence="1">
    <location>
        <position position="479"/>
    </location>
    <ligand>
        <name>meso-2,6-diaminopimelate</name>
        <dbReference type="ChEBI" id="CHEBI:57791"/>
    </ligand>
</feature>
<feature type="modified residue" description="N6-carboxylysine" evidence="1">
    <location>
        <position position="233"/>
    </location>
</feature>
<keyword id="KW-0067">ATP-binding</keyword>
<keyword id="KW-0131">Cell cycle</keyword>
<keyword id="KW-0132">Cell division</keyword>
<keyword id="KW-0133">Cell shape</keyword>
<keyword id="KW-0961">Cell wall biogenesis/degradation</keyword>
<keyword id="KW-0963">Cytoplasm</keyword>
<keyword id="KW-0436">Ligase</keyword>
<keyword id="KW-0460">Magnesium</keyword>
<keyword id="KW-0547">Nucleotide-binding</keyword>
<keyword id="KW-0573">Peptidoglycan synthesis</keyword>
<keyword id="KW-1185">Reference proteome</keyword>
<sequence>MTYPGPPRPAHVSATPLAELAGQMGAATPERDAEVTGITHDSRAVRPGDLYAALPGARLHGADFVTQAAGLGAVAVLTDPTGADRAAATGLPVLVVDDPRGRMGELAATIYGHPGRDLLQIGITGTSGKTTTAYLIEGGLRTVRSTGLIGTVEMRIGDERIKSERTTPEATDLQALFAVMRERGVDAVAMEVSSHALVLGRVDGCVFDIAVFNNLSPEHMEFHSDMEDYFRAKAQLFTPQRSKLGVVNFDDEYGRRLVEEAGVPIVTFSAEGHPDADWRAQDVEVGPMDSTFTVIGPKEERITARSPLAGPFNVANTLAAIVALAAAGLDPQAAADGIAAVPGVPGRLERVDVGQPYLAVVDYAHKTDAVESVLRALRKVTEGKLHIVLGCGGDRDRTKRMPMGAAAARLADTAVLTSDNPRSEDPLAILATMLAGAAEVPSHERGEVQVFENRAAAIAAVVARARPGDTVLVAGKGHEQGQDIAGVVRPFDDRLVLREAIQQTQG</sequence>
<accession>Q82AE1</accession>
<gene>
    <name evidence="1" type="primary">murE</name>
    <name type="ordered locus">SAV_6117</name>
</gene>
<organism>
    <name type="scientific">Streptomyces avermitilis (strain ATCC 31267 / DSM 46492 / JCM 5070 / NBRC 14893 / NCIMB 12804 / NRRL 8165 / MA-4680)</name>
    <dbReference type="NCBI Taxonomy" id="227882"/>
    <lineage>
        <taxon>Bacteria</taxon>
        <taxon>Bacillati</taxon>
        <taxon>Actinomycetota</taxon>
        <taxon>Actinomycetes</taxon>
        <taxon>Kitasatosporales</taxon>
        <taxon>Streptomycetaceae</taxon>
        <taxon>Streptomyces</taxon>
    </lineage>
</organism>
<reference key="1">
    <citation type="journal article" date="2001" name="Proc. Natl. Acad. Sci. U.S.A.">
        <title>Genome sequence of an industrial microorganism Streptomyces avermitilis: deducing the ability of producing secondary metabolites.</title>
        <authorList>
            <person name="Omura S."/>
            <person name="Ikeda H."/>
            <person name="Ishikawa J."/>
            <person name="Hanamoto A."/>
            <person name="Takahashi C."/>
            <person name="Shinose M."/>
            <person name="Takahashi Y."/>
            <person name="Horikawa H."/>
            <person name="Nakazawa H."/>
            <person name="Osonoe T."/>
            <person name="Kikuchi H."/>
            <person name="Shiba T."/>
            <person name="Sakaki Y."/>
            <person name="Hattori M."/>
        </authorList>
    </citation>
    <scope>NUCLEOTIDE SEQUENCE [LARGE SCALE GENOMIC DNA]</scope>
    <source>
        <strain>ATCC 31267 / DSM 46492 / JCM 5070 / NBRC 14893 / NCIMB 12804 / NRRL 8165 / MA-4680</strain>
    </source>
</reference>
<reference key="2">
    <citation type="journal article" date="2003" name="Nat. Biotechnol.">
        <title>Complete genome sequence and comparative analysis of the industrial microorganism Streptomyces avermitilis.</title>
        <authorList>
            <person name="Ikeda H."/>
            <person name="Ishikawa J."/>
            <person name="Hanamoto A."/>
            <person name="Shinose M."/>
            <person name="Kikuchi H."/>
            <person name="Shiba T."/>
            <person name="Sakaki Y."/>
            <person name="Hattori M."/>
            <person name="Omura S."/>
        </authorList>
    </citation>
    <scope>NUCLEOTIDE SEQUENCE [LARGE SCALE GENOMIC DNA]</scope>
    <source>
        <strain>ATCC 31267 / DSM 46492 / JCM 5070 / NBRC 14893 / NCIMB 12804 / NRRL 8165 / MA-4680</strain>
    </source>
</reference>
<protein>
    <recommendedName>
        <fullName evidence="1">UDP-N-acetylmuramoyl-L-alanyl-D-glutamate--2,6-diaminopimelate ligase</fullName>
        <ecNumber evidence="1">6.3.2.13</ecNumber>
    </recommendedName>
    <alternativeName>
        <fullName evidence="1">Meso-A2pm-adding enzyme</fullName>
    </alternativeName>
    <alternativeName>
        <fullName evidence="1">Meso-diaminopimelate-adding enzyme</fullName>
    </alternativeName>
    <alternativeName>
        <fullName evidence="1">UDP-MurNAc-L-Ala-D-Glu:meso-diaminopimelate ligase</fullName>
    </alternativeName>
    <alternativeName>
        <fullName evidence="1">UDP-MurNAc-tripeptide synthetase</fullName>
    </alternativeName>
    <alternativeName>
        <fullName evidence="1">UDP-N-acetylmuramyl-tripeptide synthetase</fullName>
    </alternativeName>
</protein>
<evidence type="ECO:0000255" key="1">
    <source>
        <dbReference type="HAMAP-Rule" id="MF_00208"/>
    </source>
</evidence>
<name>MURE_STRAW</name>
<dbReference type="EC" id="6.3.2.13" evidence="1"/>
<dbReference type="EMBL" id="BA000030">
    <property type="protein sequence ID" value="BAC73828.1"/>
    <property type="molecule type" value="Genomic_DNA"/>
</dbReference>
<dbReference type="SMR" id="Q82AE1"/>
<dbReference type="KEGG" id="sma:SAVERM_6117"/>
<dbReference type="eggNOG" id="COG0769">
    <property type="taxonomic scope" value="Bacteria"/>
</dbReference>
<dbReference type="HOGENOM" id="CLU_022291_4_1_11"/>
<dbReference type="UniPathway" id="UPA00219"/>
<dbReference type="Proteomes" id="UP000000428">
    <property type="component" value="Chromosome"/>
</dbReference>
<dbReference type="GO" id="GO:0005737">
    <property type="term" value="C:cytoplasm"/>
    <property type="evidence" value="ECO:0007669"/>
    <property type="project" value="UniProtKB-SubCell"/>
</dbReference>
<dbReference type="GO" id="GO:0005524">
    <property type="term" value="F:ATP binding"/>
    <property type="evidence" value="ECO:0007669"/>
    <property type="project" value="UniProtKB-UniRule"/>
</dbReference>
<dbReference type="GO" id="GO:0000287">
    <property type="term" value="F:magnesium ion binding"/>
    <property type="evidence" value="ECO:0007669"/>
    <property type="project" value="UniProtKB-UniRule"/>
</dbReference>
<dbReference type="GO" id="GO:0008765">
    <property type="term" value="F:UDP-N-acetylmuramoylalanyl-D-glutamate-2,6-diaminopimelate ligase activity"/>
    <property type="evidence" value="ECO:0007669"/>
    <property type="project" value="UniProtKB-UniRule"/>
</dbReference>
<dbReference type="GO" id="GO:0051301">
    <property type="term" value="P:cell division"/>
    <property type="evidence" value="ECO:0007669"/>
    <property type="project" value="UniProtKB-KW"/>
</dbReference>
<dbReference type="GO" id="GO:0071555">
    <property type="term" value="P:cell wall organization"/>
    <property type="evidence" value="ECO:0007669"/>
    <property type="project" value="UniProtKB-KW"/>
</dbReference>
<dbReference type="GO" id="GO:0009252">
    <property type="term" value="P:peptidoglycan biosynthetic process"/>
    <property type="evidence" value="ECO:0007669"/>
    <property type="project" value="UniProtKB-UniRule"/>
</dbReference>
<dbReference type="GO" id="GO:0008360">
    <property type="term" value="P:regulation of cell shape"/>
    <property type="evidence" value="ECO:0007669"/>
    <property type="project" value="UniProtKB-KW"/>
</dbReference>
<dbReference type="Gene3D" id="3.90.190.20">
    <property type="entry name" value="Mur ligase, C-terminal domain"/>
    <property type="match status" value="1"/>
</dbReference>
<dbReference type="Gene3D" id="3.40.1190.10">
    <property type="entry name" value="Mur-like, catalytic domain"/>
    <property type="match status" value="1"/>
</dbReference>
<dbReference type="Gene3D" id="3.40.1390.10">
    <property type="entry name" value="MurE/MurF, N-terminal domain"/>
    <property type="match status" value="1"/>
</dbReference>
<dbReference type="HAMAP" id="MF_00208">
    <property type="entry name" value="MurE"/>
    <property type="match status" value="1"/>
</dbReference>
<dbReference type="InterPro" id="IPR036565">
    <property type="entry name" value="Mur-like_cat_sf"/>
</dbReference>
<dbReference type="InterPro" id="IPR004101">
    <property type="entry name" value="Mur_ligase_C"/>
</dbReference>
<dbReference type="InterPro" id="IPR036615">
    <property type="entry name" value="Mur_ligase_C_dom_sf"/>
</dbReference>
<dbReference type="InterPro" id="IPR013221">
    <property type="entry name" value="Mur_ligase_cen"/>
</dbReference>
<dbReference type="InterPro" id="IPR000713">
    <property type="entry name" value="Mur_ligase_N"/>
</dbReference>
<dbReference type="InterPro" id="IPR035911">
    <property type="entry name" value="MurE/MurF_N"/>
</dbReference>
<dbReference type="InterPro" id="IPR005761">
    <property type="entry name" value="UDP-N-AcMur-Glu-dNH2Pim_ligase"/>
</dbReference>
<dbReference type="NCBIfam" id="TIGR01085">
    <property type="entry name" value="murE"/>
    <property type="match status" value="1"/>
</dbReference>
<dbReference type="NCBIfam" id="NF001124">
    <property type="entry name" value="PRK00139.1-2"/>
    <property type="match status" value="1"/>
</dbReference>
<dbReference type="NCBIfam" id="NF001126">
    <property type="entry name" value="PRK00139.1-4"/>
    <property type="match status" value="1"/>
</dbReference>
<dbReference type="PANTHER" id="PTHR23135">
    <property type="entry name" value="MUR LIGASE FAMILY MEMBER"/>
    <property type="match status" value="1"/>
</dbReference>
<dbReference type="PANTHER" id="PTHR23135:SF4">
    <property type="entry name" value="UDP-N-ACETYLMURAMOYL-L-ALANYL-D-GLUTAMATE--2,6-DIAMINOPIMELATE LIGASE MURE HOMOLOG, CHLOROPLASTIC"/>
    <property type="match status" value="1"/>
</dbReference>
<dbReference type="Pfam" id="PF01225">
    <property type="entry name" value="Mur_ligase"/>
    <property type="match status" value="1"/>
</dbReference>
<dbReference type="Pfam" id="PF02875">
    <property type="entry name" value="Mur_ligase_C"/>
    <property type="match status" value="1"/>
</dbReference>
<dbReference type="Pfam" id="PF08245">
    <property type="entry name" value="Mur_ligase_M"/>
    <property type="match status" value="1"/>
</dbReference>
<dbReference type="SUPFAM" id="SSF53623">
    <property type="entry name" value="MurD-like peptide ligases, catalytic domain"/>
    <property type="match status" value="1"/>
</dbReference>
<dbReference type="SUPFAM" id="SSF53244">
    <property type="entry name" value="MurD-like peptide ligases, peptide-binding domain"/>
    <property type="match status" value="1"/>
</dbReference>
<dbReference type="SUPFAM" id="SSF63418">
    <property type="entry name" value="MurE/MurF N-terminal domain"/>
    <property type="match status" value="1"/>
</dbReference>
<comment type="function">
    <text evidence="1">Catalyzes the addition of meso-diaminopimelic acid to the nucleotide precursor UDP-N-acetylmuramoyl-L-alanyl-D-glutamate (UMAG) in the biosynthesis of bacterial cell-wall peptidoglycan.</text>
</comment>
<comment type="catalytic activity">
    <reaction evidence="1">
        <text>UDP-N-acetyl-alpha-D-muramoyl-L-alanyl-D-glutamate + meso-2,6-diaminopimelate + ATP = UDP-N-acetyl-alpha-D-muramoyl-L-alanyl-gamma-D-glutamyl-meso-2,6-diaminopimelate + ADP + phosphate + H(+)</text>
        <dbReference type="Rhea" id="RHEA:23676"/>
        <dbReference type="ChEBI" id="CHEBI:15378"/>
        <dbReference type="ChEBI" id="CHEBI:30616"/>
        <dbReference type="ChEBI" id="CHEBI:43474"/>
        <dbReference type="ChEBI" id="CHEBI:57791"/>
        <dbReference type="ChEBI" id="CHEBI:83900"/>
        <dbReference type="ChEBI" id="CHEBI:83905"/>
        <dbReference type="ChEBI" id="CHEBI:456216"/>
        <dbReference type="EC" id="6.3.2.13"/>
    </reaction>
</comment>
<comment type="cofactor">
    <cofactor evidence="1">
        <name>Mg(2+)</name>
        <dbReference type="ChEBI" id="CHEBI:18420"/>
    </cofactor>
</comment>
<comment type="pathway">
    <text evidence="1">Cell wall biogenesis; peptidoglycan biosynthesis.</text>
</comment>
<comment type="subcellular location">
    <subcellularLocation>
        <location evidence="1">Cytoplasm</location>
    </subcellularLocation>
</comment>
<comment type="PTM">
    <text evidence="1">Carboxylation is probably crucial for Mg(2+) binding and, consequently, for the gamma-phosphate positioning of ATP.</text>
</comment>
<comment type="similarity">
    <text evidence="1">Belongs to the MurCDEF family. MurE subfamily.</text>
</comment>